<sequence>MALPRCMWPNYVWRAMMACVVHRGSGAPLTLCLLGCLLQTFHVLSQKLDDVDPLVTTNFGKIRGIKKELNNEILGPVIQFLGVPYAAPPTGEHRFQPPEPPSPWSDIRNATQFAPVCPQNIIDGRLPEVMLPVWFTNNLDVVSSYVQDQSEDCLYLNIYVPTEDVKRISKECARKPGKKICRKGDIRDSGGPKPVMVYIHGGSYMEGTGNLYDGSVLASYGNVIVITVNYRLGVLGFLSTGDQAAKGNYGLLDLIQALRWTSENIGFFGGDPLRITVFGSGAGGSCVNLLTLSHYSEGNRWSNSTKGLFQRAIAQSGTALSSWAVSFQPAKYARILATKVGCNVSDTVELVECLQKKPYKELVDQDVQPARYHIAFGPVIDGDVIPDDPQILMEQGEFLNYDIMLGVNQGEGLKFVENIVDSDDGVSASDFDFAVSNFVDNLYGYPEGKDVLRETIKFMYTDWADRHNPETRRKTLLALFTDHQWVAPAVATADLHSNFGSPTYFYAFYHHCQTDQVPAWADAAHGDEVPYVLGIPMIGPTELFPCNFSKNDVMLSAVVMTYWTNFAKTGDPNQPVPQDTKFIHTKPNRFEEVAWTRYSQKDQLYLHIGLKPRVKEHYRANKVNLWLELVPHLHNLNDISQYTSTTTKVPSTDITLRPTRKNSTPVTSAFPTAKQDDPKQQPSPFSVDQRDYSTELSVTIAVGASLLFLNILAFAALYYKKDKRRHDVHRRCSPQRTTTNDLTHAPEEEIMSLQMKHTDLDHECESIHPHEVVLRTACPPDYTLAMRRSPDDVPLMTPNTITMIPNTIPGIQPLHTFNTFTGGQNNTLPHPHPHPHSHSTTRV</sequence>
<dbReference type="EMBL" id="U22952">
    <property type="protein sequence ID" value="AAA85720.1"/>
    <property type="molecule type" value="mRNA"/>
</dbReference>
<dbReference type="RefSeq" id="NP_446320.1">
    <molecule id="Q62765-1"/>
    <property type="nucleotide sequence ID" value="NM_053868.2"/>
</dbReference>
<dbReference type="RefSeq" id="XP_017446072.1">
    <molecule id="Q62765-4"/>
    <property type="nucleotide sequence ID" value="XM_017590583.3"/>
</dbReference>
<dbReference type="RefSeq" id="XP_017446073.1">
    <property type="nucleotide sequence ID" value="XM_017590584.1"/>
</dbReference>
<dbReference type="RefSeq" id="XP_017446074.1">
    <property type="nucleotide sequence ID" value="XM_017590585.1"/>
</dbReference>
<dbReference type="RefSeq" id="XP_017446075.1">
    <property type="nucleotide sequence ID" value="XM_017590586.1"/>
</dbReference>
<dbReference type="RefSeq" id="XP_017446076.1">
    <property type="nucleotide sequence ID" value="XM_017590587.1"/>
</dbReference>
<dbReference type="RefSeq" id="XP_017446077.1">
    <property type="nucleotide sequence ID" value="XM_017590588.1"/>
</dbReference>
<dbReference type="RefSeq" id="XP_017446078.1">
    <property type="nucleotide sequence ID" value="XM_017590589.1"/>
</dbReference>
<dbReference type="RefSeq" id="XP_017446079.1">
    <molecule id="Q62765-2"/>
    <property type="nucleotide sequence ID" value="XM_017590590.3"/>
</dbReference>
<dbReference type="RefSeq" id="XP_063137229.1">
    <molecule id="Q62765-1"/>
    <property type="nucleotide sequence ID" value="XM_063281159.1"/>
</dbReference>
<dbReference type="RefSeq" id="XP_063137231.1">
    <molecule id="Q62765-4"/>
    <property type="nucleotide sequence ID" value="XM_063281161.1"/>
</dbReference>
<dbReference type="RefSeq" id="XP_063137232.1">
    <molecule id="Q62765-4"/>
    <property type="nucleotide sequence ID" value="XM_063281162.1"/>
</dbReference>
<dbReference type="RefSeq" id="XP_063137233.1">
    <molecule id="Q62765-4"/>
    <property type="nucleotide sequence ID" value="XM_063281163.1"/>
</dbReference>
<dbReference type="RefSeq" id="XP_063137234.1">
    <molecule id="Q62765-4"/>
    <property type="nucleotide sequence ID" value="XM_063281164.1"/>
</dbReference>
<dbReference type="RefSeq" id="XP_063137235.1">
    <molecule id="Q62765-2"/>
    <property type="nucleotide sequence ID" value="XM_063281165.1"/>
</dbReference>
<dbReference type="PDB" id="3BIW">
    <property type="method" value="X-ray"/>
    <property type="resolution" value="3.50 A"/>
    <property type="chains" value="A/B/C/D=46-638"/>
</dbReference>
<dbReference type="PDB" id="3BIX">
    <property type="method" value="X-ray"/>
    <property type="resolution" value="1.80 A"/>
    <property type="chains" value="A/B/C/D=46-638"/>
</dbReference>
<dbReference type="PDB" id="3VKF">
    <property type="method" value="X-ray"/>
    <property type="resolution" value="3.30 A"/>
    <property type="chains" value="A/B=45-638"/>
</dbReference>
<dbReference type="PDBsum" id="3BIW"/>
<dbReference type="PDBsum" id="3BIX"/>
<dbReference type="PDBsum" id="3VKF"/>
<dbReference type="SMR" id="Q62765"/>
<dbReference type="BioGRID" id="250532">
    <property type="interactions" value="12"/>
</dbReference>
<dbReference type="ComplexPortal" id="CPX-4061">
    <molecule id="Q62765-2"/>
    <property type="entry name" value="NLGN1(-SSA-SSB) - NRXN1-beta(-SS4) complex"/>
</dbReference>
<dbReference type="ComplexPortal" id="CPX-4123">
    <property type="entry name" value="NLGN1(+SSA+SSB) - NRXN1-beta(-SS4) complex"/>
</dbReference>
<dbReference type="DIP" id="DIP-44832N"/>
<dbReference type="FunCoup" id="Q62765">
    <property type="interactions" value="1892"/>
</dbReference>
<dbReference type="IntAct" id="Q62765">
    <property type="interactions" value="7"/>
</dbReference>
<dbReference type="MINT" id="Q62765"/>
<dbReference type="STRING" id="10116.ENSRNOP00000075793"/>
<dbReference type="ESTHER" id="ratno-1neur">
    <property type="family name" value="Neuroligin"/>
</dbReference>
<dbReference type="MEROPS" id="S09.994"/>
<dbReference type="GlyConnect" id="433">
    <property type="glycosylation" value="28 N-Linked glycans, 3 O-Linked glycans"/>
</dbReference>
<dbReference type="GlyCosmos" id="Q62765">
    <property type="glycosylation" value="6 sites, 60 glycans"/>
</dbReference>
<dbReference type="GlyGen" id="Q62765">
    <property type="glycosylation" value="16 sites, 54 N-linked glycans (1 site), 6 O-linked glycans (1 site)"/>
</dbReference>
<dbReference type="iPTMnet" id="Q62765"/>
<dbReference type="PhosphoSitePlus" id="Q62765"/>
<dbReference type="PaxDb" id="10116-ENSRNOP00000049486"/>
<dbReference type="ABCD" id="Q62765">
    <property type="antibodies" value="1 sequenced antibody"/>
</dbReference>
<dbReference type="Ensembl" id="ENSRNOT00000041111.3">
    <molecule id="Q62765-1"/>
    <property type="protein sequence ID" value="ENSRNOP00000040172.3"/>
    <property type="gene ID" value="ENSRNOG00000032576.7"/>
</dbReference>
<dbReference type="Ensembl" id="ENSRNOT00000092660.2">
    <molecule id="Q62765-4"/>
    <property type="protein sequence ID" value="ENSRNOP00000075793.2"/>
    <property type="gene ID" value="ENSRNOG00000032576.7"/>
</dbReference>
<dbReference type="GeneID" id="116647"/>
<dbReference type="KEGG" id="rno:116647"/>
<dbReference type="UCSC" id="RGD:621117">
    <molecule id="Q62765-1"/>
    <property type="organism name" value="rat"/>
</dbReference>
<dbReference type="AGR" id="RGD:621117"/>
<dbReference type="CTD" id="22871"/>
<dbReference type="RGD" id="621117">
    <property type="gene designation" value="Nlgn1"/>
</dbReference>
<dbReference type="eggNOG" id="KOG1516">
    <property type="taxonomic scope" value="Eukaryota"/>
</dbReference>
<dbReference type="GeneTree" id="ENSGT00940000155789"/>
<dbReference type="HOGENOM" id="CLU_006586_5_1_1"/>
<dbReference type="InParanoid" id="Q62765"/>
<dbReference type="OMA" id="SLHPHDM"/>
<dbReference type="OrthoDB" id="408631at2759"/>
<dbReference type="PhylomeDB" id="Q62765"/>
<dbReference type="TreeFam" id="TF326187"/>
<dbReference type="Reactome" id="R-RNO-6794361">
    <property type="pathway name" value="Neurexins and neuroligins"/>
</dbReference>
<dbReference type="EvolutionaryTrace" id="Q62765"/>
<dbReference type="PRO" id="PR:Q62765"/>
<dbReference type="Proteomes" id="UP000002494">
    <property type="component" value="Chromosome 2"/>
</dbReference>
<dbReference type="Bgee" id="ENSRNOG00000032576">
    <property type="expression patterns" value="Expressed in frontal cortex and 7 other cell types or tissues"/>
</dbReference>
<dbReference type="ExpressionAtlas" id="Q62765">
    <property type="expression patterns" value="baseline and differential"/>
</dbReference>
<dbReference type="GO" id="GO:0009986">
    <property type="term" value="C:cell surface"/>
    <property type="evidence" value="ECO:0000314"/>
    <property type="project" value="BHF-UCL"/>
</dbReference>
<dbReference type="GO" id="GO:0030425">
    <property type="term" value="C:dendrite"/>
    <property type="evidence" value="ECO:0000314"/>
    <property type="project" value="BHF-UCL"/>
</dbReference>
<dbReference type="GO" id="GO:0043198">
    <property type="term" value="C:dendritic shaft"/>
    <property type="evidence" value="ECO:0000314"/>
    <property type="project" value="RGD"/>
</dbReference>
<dbReference type="GO" id="GO:0043197">
    <property type="term" value="C:dendritic spine"/>
    <property type="evidence" value="ECO:0000314"/>
    <property type="project" value="BHF-UCL"/>
</dbReference>
<dbReference type="GO" id="GO:0060076">
    <property type="term" value="C:excitatory synapse"/>
    <property type="evidence" value="ECO:0000303"/>
    <property type="project" value="ComplexPortal"/>
</dbReference>
<dbReference type="GO" id="GO:0009897">
    <property type="term" value="C:external side of plasma membrane"/>
    <property type="evidence" value="ECO:0000266"/>
    <property type="project" value="RGD"/>
</dbReference>
<dbReference type="GO" id="GO:0032433">
    <property type="term" value="C:filopodium tip"/>
    <property type="evidence" value="ECO:0000314"/>
    <property type="project" value="BHF-UCL"/>
</dbReference>
<dbReference type="GO" id="GO:0098982">
    <property type="term" value="C:GABA-ergic synapse"/>
    <property type="evidence" value="ECO:0000303"/>
    <property type="project" value="ComplexPortal"/>
</dbReference>
<dbReference type="GO" id="GO:0098978">
    <property type="term" value="C:glutamatergic synapse"/>
    <property type="evidence" value="ECO:0000314"/>
    <property type="project" value="SynGO"/>
</dbReference>
<dbReference type="GO" id="GO:0005794">
    <property type="term" value="C:Golgi apparatus"/>
    <property type="evidence" value="ECO:0000314"/>
    <property type="project" value="BHF-UCL"/>
</dbReference>
<dbReference type="GO" id="GO:0060077">
    <property type="term" value="C:inhibitory synapse"/>
    <property type="evidence" value="ECO:0000303"/>
    <property type="project" value="ComplexPortal"/>
</dbReference>
<dbReference type="GO" id="GO:0031594">
    <property type="term" value="C:neuromuscular junction"/>
    <property type="evidence" value="ECO:0000303"/>
    <property type="project" value="ComplexPortal"/>
</dbReference>
<dbReference type="GO" id="GO:0098984">
    <property type="term" value="C:neuron to neuron synapse"/>
    <property type="evidence" value="ECO:0000303"/>
    <property type="project" value="ComplexPortal"/>
</dbReference>
<dbReference type="GO" id="GO:0005886">
    <property type="term" value="C:plasma membrane"/>
    <property type="evidence" value="ECO:0000314"/>
    <property type="project" value="BHF-UCL"/>
</dbReference>
<dbReference type="GO" id="GO:0014069">
    <property type="term" value="C:postsynaptic density"/>
    <property type="evidence" value="ECO:0007669"/>
    <property type="project" value="UniProtKB-SubCell"/>
</dbReference>
<dbReference type="GO" id="GO:0099634">
    <property type="term" value="C:postsynaptic specialization membrane"/>
    <property type="evidence" value="ECO:0000314"/>
    <property type="project" value="BHF-UCL"/>
</dbReference>
<dbReference type="GO" id="GO:0098793">
    <property type="term" value="C:presynapse"/>
    <property type="evidence" value="ECO:0007669"/>
    <property type="project" value="GOC"/>
</dbReference>
<dbReference type="GO" id="GO:0098635">
    <property type="term" value="C:protein complex involved in cell-cell adhesion"/>
    <property type="evidence" value="ECO:0000353"/>
    <property type="project" value="ComplexPortal"/>
</dbReference>
<dbReference type="GO" id="GO:0043235">
    <property type="term" value="C:receptor complex"/>
    <property type="evidence" value="ECO:0000250"/>
    <property type="project" value="BHF-UCL"/>
</dbReference>
<dbReference type="GO" id="GO:0045202">
    <property type="term" value="C:synapse"/>
    <property type="evidence" value="ECO:0000314"/>
    <property type="project" value="UniProtKB"/>
</dbReference>
<dbReference type="GO" id="GO:0043083">
    <property type="term" value="C:synaptic cleft"/>
    <property type="evidence" value="ECO:0007669"/>
    <property type="project" value="UniProtKB-SubCell"/>
</dbReference>
<dbReference type="GO" id="GO:0050839">
    <property type="term" value="F:cell adhesion molecule binding"/>
    <property type="evidence" value="ECO:0000353"/>
    <property type="project" value="BHF-UCL"/>
</dbReference>
<dbReference type="GO" id="GO:0042802">
    <property type="term" value="F:identical protein binding"/>
    <property type="evidence" value="ECO:0000353"/>
    <property type="project" value="BHF-UCL"/>
</dbReference>
<dbReference type="GO" id="GO:0042043">
    <property type="term" value="F:neurexin family protein binding"/>
    <property type="evidence" value="ECO:0000353"/>
    <property type="project" value="ARUK-UCL"/>
</dbReference>
<dbReference type="GO" id="GO:0030165">
    <property type="term" value="F:PDZ domain binding"/>
    <property type="evidence" value="ECO:0000266"/>
    <property type="project" value="RGD"/>
</dbReference>
<dbReference type="GO" id="GO:0044877">
    <property type="term" value="F:protein-containing complex binding"/>
    <property type="evidence" value="ECO:0000314"/>
    <property type="project" value="RGD"/>
</dbReference>
<dbReference type="GO" id="GO:0097110">
    <property type="term" value="F:scaffold protein binding"/>
    <property type="evidence" value="ECO:0000266"/>
    <property type="project" value="RGD"/>
</dbReference>
<dbReference type="GO" id="GO:0038023">
    <property type="term" value="F:signaling receptor activity"/>
    <property type="evidence" value="ECO:0000314"/>
    <property type="project" value="BHF-UCL"/>
</dbReference>
<dbReference type="GO" id="GO:0097113">
    <property type="term" value="P:AMPA glutamate receptor clustering"/>
    <property type="evidence" value="ECO:0000315"/>
    <property type="project" value="BHF-UCL"/>
</dbReference>
<dbReference type="GO" id="GO:0098990">
    <property type="term" value="P:AMPA selective glutamate receptor signaling pathway"/>
    <property type="evidence" value="ECO:0000314"/>
    <property type="project" value="BHF-UCL"/>
</dbReference>
<dbReference type="GO" id="GO:0016339">
    <property type="term" value="P:calcium-dependent cell-cell adhesion via plasma membrane cell adhesion molecules"/>
    <property type="evidence" value="ECO:0000314"/>
    <property type="project" value="UniProtKB"/>
</dbReference>
<dbReference type="GO" id="GO:0090125">
    <property type="term" value="P:cell-cell adhesion involved in synapse maturation"/>
    <property type="evidence" value="ECO:0000303"/>
    <property type="project" value="ComplexPortal"/>
</dbReference>
<dbReference type="GO" id="GO:0071277">
    <property type="term" value="P:cellular response to calcium ion"/>
    <property type="evidence" value="ECO:0000314"/>
    <property type="project" value="ARUK-UCL"/>
</dbReference>
<dbReference type="GO" id="GO:0048789">
    <property type="term" value="P:cytoskeletal matrix organization at active zone"/>
    <property type="evidence" value="ECO:0000315"/>
    <property type="project" value="BHF-UCL"/>
</dbReference>
<dbReference type="GO" id="GO:0045184">
    <property type="term" value="P:establishment of protein localization"/>
    <property type="evidence" value="ECO:0000250"/>
    <property type="project" value="BHF-UCL"/>
</dbReference>
<dbReference type="GO" id="GO:1904861">
    <property type="term" value="P:excitatory synapse assembly"/>
    <property type="evidence" value="ECO:0000266"/>
    <property type="project" value="RGD"/>
</dbReference>
<dbReference type="GO" id="GO:0007157">
    <property type="term" value="P:heterophilic cell-cell adhesion via plasma membrane cell adhesion molecules"/>
    <property type="evidence" value="ECO:0000250"/>
    <property type="project" value="BHF-UCL"/>
</dbReference>
<dbReference type="GO" id="GO:0060291">
    <property type="term" value="P:long-term synaptic potentiation"/>
    <property type="evidence" value="ECO:0000315"/>
    <property type="project" value="RGD"/>
</dbReference>
<dbReference type="GO" id="GO:0099558">
    <property type="term" value="P:maintenance of synapse structure"/>
    <property type="evidence" value="ECO:0000303"/>
    <property type="project" value="ComplexPortal"/>
</dbReference>
<dbReference type="GO" id="GO:0050804">
    <property type="term" value="P:modulation of chemical synaptic transmission"/>
    <property type="evidence" value="ECO:0000315"/>
    <property type="project" value="ARUK-UCL"/>
</dbReference>
<dbReference type="GO" id="GO:0061002">
    <property type="term" value="P:negative regulation of dendritic spine morphogenesis"/>
    <property type="evidence" value="ECO:0000250"/>
    <property type="project" value="BHF-UCL"/>
</dbReference>
<dbReference type="GO" id="GO:0007399">
    <property type="term" value="P:nervous system development"/>
    <property type="evidence" value="ECO:0000250"/>
    <property type="project" value="UniProtKB"/>
</dbReference>
<dbReference type="GO" id="GO:0097115">
    <property type="term" value="P:neurexin clustering involved in presynaptic membrane assembly"/>
    <property type="evidence" value="ECO:0000250"/>
    <property type="project" value="BHF-UCL"/>
</dbReference>
<dbReference type="GO" id="GO:0007158">
    <property type="term" value="P:neuron cell-cell adhesion"/>
    <property type="evidence" value="ECO:0000314"/>
    <property type="project" value="BHF-UCL"/>
</dbReference>
<dbReference type="GO" id="GO:0140058">
    <property type="term" value="P:neuron projection arborization"/>
    <property type="evidence" value="ECO:0000316"/>
    <property type="project" value="ARUK-UCL"/>
</dbReference>
<dbReference type="GO" id="GO:0031175">
    <property type="term" value="P:neuron projection development"/>
    <property type="evidence" value="ECO:0000316"/>
    <property type="project" value="ARUK-UCL"/>
</dbReference>
<dbReference type="GO" id="GO:0048812">
    <property type="term" value="P:neuron projection morphogenesis"/>
    <property type="evidence" value="ECO:0000303"/>
    <property type="project" value="ComplexPortal"/>
</dbReference>
<dbReference type="GO" id="GO:0045161">
    <property type="term" value="P:neuronal ion channel clustering"/>
    <property type="evidence" value="ECO:0000304"/>
    <property type="project" value="UniProtKB"/>
</dbReference>
<dbReference type="GO" id="GO:0097114">
    <property type="term" value="P:NMDA glutamate receptor clustering"/>
    <property type="evidence" value="ECO:0000314"/>
    <property type="project" value="BHF-UCL"/>
</dbReference>
<dbReference type="GO" id="GO:0098989">
    <property type="term" value="P:NMDA selective glutamate receptor signaling pathway"/>
    <property type="evidence" value="ECO:0000314"/>
    <property type="project" value="BHF-UCL"/>
</dbReference>
<dbReference type="GO" id="GO:0010841">
    <property type="term" value="P:positive regulation of circadian sleep/wake cycle, wakefulness"/>
    <property type="evidence" value="ECO:0000250"/>
    <property type="project" value="UniProtKB"/>
</dbReference>
<dbReference type="GO" id="GO:0060999">
    <property type="term" value="P:positive regulation of dendritic spine development"/>
    <property type="evidence" value="ECO:0000314"/>
    <property type="project" value="BHF-UCL"/>
</dbReference>
<dbReference type="GO" id="GO:2000463">
    <property type="term" value="P:positive regulation of excitatory postsynaptic potential"/>
    <property type="evidence" value="ECO:0000314"/>
    <property type="project" value="BHF-UCL"/>
</dbReference>
<dbReference type="GO" id="GO:0051491">
    <property type="term" value="P:positive regulation of filopodium assembly"/>
    <property type="evidence" value="ECO:0000314"/>
    <property type="project" value="BHF-UCL"/>
</dbReference>
<dbReference type="GO" id="GO:1902533">
    <property type="term" value="P:positive regulation of intracellular signal transduction"/>
    <property type="evidence" value="ECO:0000314"/>
    <property type="project" value="BHF-UCL"/>
</dbReference>
<dbReference type="GO" id="GO:1900075">
    <property type="term" value="P:positive regulation of neuromuscular synaptic transmission"/>
    <property type="evidence" value="ECO:0000303"/>
    <property type="project" value="ComplexPortal"/>
</dbReference>
<dbReference type="GO" id="GO:0010976">
    <property type="term" value="P:positive regulation of neuron projection development"/>
    <property type="evidence" value="ECO:0000303"/>
    <property type="project" value="ComplexPortal"/>
</dbReference>
<dbReference type="GO" id="GO:1905520">
    <property type="term" value="P:positive regulation of presynaptic active zone assembly"/>
    <property type="evidence" value="ECO:0000314"/>
    <property type="project" value="BHF-UCL"/>
</dbReference>
<dbReference type="GO" id="GO:1902474">
    <property type="term" value="P:positive regulation of protein localization to synapse"/>
    <property type="evidence" value="ECO:0000315"/>
    <property type="project" value="RGD"/>
</dbReference>
<dbReference type="GO" id="GO:1900029">
    <property type="term" value="P:positive regulation of ruffle assembly"/>
    <property type="evidence" value="ECO:0000314"/>
    <property type="project" value="BHF-UCL"/>
</dbReference>
<dbReference type="GO" id="GO:0051965">
    <property type="term" value="P:positive regulation of synapse assembly"/>
    <property type="evidence" value="ECO:0000314"/>
    <property type="project" value="BHF-UCL"/>
</dbReference>
<dbReference type="GO" id="GO:0032230">
    <property type="term" value="P:positive regulation of synaptic transmission, GABAergic"/>
    <property type="evidence" value="ECO:0000314"/>
    <property type="project" value="BHF-UCL"/>
</dbReference>
<dbReference type="GO" id="GO:0051968">
    <property type="term" value="P:positive regulation of synaptic transmission, glutamatergic"/>
    <property type="evidence" value="ECO:0000314"/>
    <property type="project" value="BHF-UCL"/>
</dbReference>
<dbReference type="GO" id="GO:2000809">
    <property type="term" value="P:positive regulation of synaptic vesicle clustering"/>
    <property type="evidence" value="ECO:0000266"/>
    <property type="project" value="RGD"/>
</dbReference>
<dbReference type="GO" id="GO:1900244">
    <property type="term" value="P:positive regulation of synaptic vesicle endocytosis"/>
    <property type="evidence" value="ECO:0000315"/>
    <property type="project" value="BHF-UCL"/>
</dbReference>
<dbReference type="GO" id="GO:2000302">
    <property type="term" value="P:positive regulation of synaptic vesicle exocytosis"/>
    <property type="evidence" value="ECO:0000315"/>
    <property type="project" value="BHF-UCL"/>
</dbReference>
<dbReference type="GO" id="GO:0097119">
    <property type="term" value="P:postsynaptic density protein 95 clustering"/>
    <property type="evidence" value="ECO:0000314"/>
    <property type="project" value="BHF-UCL"/>
</dbReference>
<dbReference type="GO" id="GO:0097104">
    <property type="term" value="P:postsynaptic membrane assembly"/>
    <property type="evidence" value="ECO:0000250"/>
    <property type="project" value="BHF-UCL"/>
</dbReference>
<dbReference type="GO" id="GO:0098698">
    <property type="term" value="P:postsynaptic specialization assembly"/>
    <property type="evidence" value="ECO:0000266"/>
    <property type="project" value="RGD"/>
</dbReference>
<dbReference type="GO" id="GO:0097105">
    <property type="term" value="P:presynaptic membrane assembly"/>
    <property type="evidence" value="ECO:0000314"/>
    <property type="project" value="BHF-UCL"/>
</dbReference>
<dbReference type="GO" id="GO:0035418">
    <property type="term" value="P:protein localization to synapse"/>
    <property type="evidence" value="ECO:0000250"/>
    <property type="project" value="BHF-UCL"/>
</dbReference>
<dbReference type="GO" id="GO:0006605">
    <property type="term" value="P:protein targeting"/>
    <property type="evidence" value="ECO:0000314"/>
    <property type="project" value="UniProtKB"/>
</dbReference>
<dbReference type="GO" id="GO:0097120">
    <property type="term" value="P:receptor localization to synapse"/>
    <property type="evidence" value="ECO:0000250"/>
    <property type="project" value="BHF-UCL"/>
</dbReference>
<dbReference type="GO" id="GO:0045664">
    <property type="term" value="P:regulation of neuron differentiation"/>
    <property type="evidence" value="ECO:0000250"/>
    <property type="project" value="UniProtKB"/>
</dbReference>
<dbReference type="GO" id="GO:2000310">
    <property type="term" value="P:regulation of NMDA receptor activity"/>
    <property type="evidence" value="ECO:0000315"/>
    <property type="project" value="CACAO"/>
</dbReference>
<dbReference type="GO" id="GO:0099151">
    <property type="term" value="P:regulation of postsynaptic density assembly"/>
    <property type="evidence" value="ECO:0000266"/>
    <property type="project" value="RGD"/>
</dbReference>
<dbReference type="GO" id="GO:0099174">
    <property type="term" value="P:regulation of presynapse organization"/>
    <property type="evidence" value="ECO:0000314"/>
    <property type="project" value="SynGO"/>
</dbReference>
<dbReference type="GO" id="GO:0002087">
    <property type="term" value="P:regulation of respiratory gaseous exchange by nervous system process"/>
    <property type="evidence" value="ECO:0000266"/>
    <property type="project" value="RGD"/>
</dbReference>
<dbReference type="GO" id="GO:0048511">
    <property type="term" value="P:rhythmic process"/>
    <property type="evidence" value="ECO:0007669"/>
    <property type="project" value="UniProtKB-KW"/>
</dbReference>
<dbReference type="GO" id="GO:0007416">
    <property type="term" value="P:synapse assembly"/>
    <property type="evidence" value="ECO:0000314"/>
    <property type="project" value="BHF-UCL"/>
</dbReference>
<dbReference type="GO" id="GO:0060074">
    <property type="term" value="P:synapse maturation"/>
    <property type="evidence" value="ECO:0000303"/>
    <property type="project" value="ComplexPortal"/>
</dbReference>
<dbReference type="GO" id="GO:0050808">
    <property type="term" value="P:synapse organization"/>
    <property type="evidence" value="ECO:0000314"/>
    <property type="project" value="MGI"/>
</dbReference>
<dbReference type="GO" id="GO:0099560">
    <property type="term" value="P:synaptic membrane adhesion"/>
    <property type="evidence" value="ECO:0000266"/>
    <property type="project" value="RGD"/>
</dbReference>
<dbReference type="GO" id="GO:0097091">
    <property type="term" value="P:synaptic vesicle clustering"/>
    <property type="evidence" value="ECO:0000314"/>
    <property type="project" value="BHF-UCL"/>
</dbReference>
<dbReference type="GO" id="GO:0016080">
    <property type="term" value="P:synaptic vesicle targeting"/>
    <property type="evidence" value="ECO:0000250"/>
    <property type="project" value="UniProtKB"/>
</dbReference>
<dbReference type="GO" id="GO:0048489">
    <property type="term" value="P:synaptic vesicle transport"/>
    <property type="evidence" value="ECO:0000315"/>
    <property type="project" value="CACAO"/>
</dbReference>
<dbReference type="GO" id="GO:0072553">
    <property type="term" value="P:terminal button organization"/>
    <property type="evidence" value="ECO:0000315"/>
    <property type="project" value="BHF-UCL"/>
</dbReference>
<dbReference type="FunFam" id="3.40.50.1820:FF:000001">
    <property type="entry name" value="Neuroligin 3 isoform"/>
    <property type="match status" value="1"/>
</dbReference>
<dbReference type="Gene3D" id="3.40.50.1820">
    <property type="entry name" value="alpha/beta hydrolase"/>
    <property type="match status" value="1"/>
</dbReference>
<dbReference type="InterPro" id="IPR029058">
    <property type="entry name" value="AB_hydrolase_fold"/>
</dbReference>
<dbReference type="InterPro" id="IPR002018">
    <property type="entry name" value="CarbesteraseB"/>
</dbReference>
<dbReference type="InterPro" id="IPR019819">
    <property type="entry name" value="Carboxylesterase_B_CS"/>
</dbReference>
<dbReference type="InterPro" id="IPR051093">
    <property type="entry name" value="Neuroligin/BSAL"/>
</dbReference>
<dbReference type="InterPro" id="IPR000460">
    <property type="entry name" value="Nlgn"/>
</dbReference>
<dbReference type="PANTHER" id="PTHR43903">
    <property type="entry name" value="NEUROLIGIN"/>
    <property type="match status" value="1"/>
</dbReference>
<dbReference type="Pfam" id="PF00135">
    <property type="entry name" value="COesterase"/>
    <property type="match status" value="1"/>
</dbReference>
<dbReference type="PRINTS" id="PR01090">
    <property type="entry name" value="NEUROLIGIN"/>
</dbReference>
<dbReference type="SUPFAM" id="SSF53474">
    <property type="entry name" value="alpha/beta-Hydrolases"/>
    <property type="match status" value="1"/>
</dbReference>
<dbReference type="PROSITE" id="PS00941">
    <property type="entry name" value="CARBOXYLESTERASE_B_2"/>
    <property type="match status" value="1"/>
</dbReference>
<evidence type="ECO:0000250" key="1">
    <source>
        <dbReference type="UniProtKB" id="Q99K10"/>
    </source>
</evidence>
<evidence type="ECO:0000255" key="2"/>
<evidence type="ECO:0000256" key="3">
    <source>
        <dbReference type="SAM" id="MobiDB-lite"/>
    </source>
</evidence>
<evidence type="ECO:0000269" key="4">
    <source>
    </source>
</evidence>
<evidence type="ECO:0000269" key="5">
    <source>
    </source>
</evidence>
<evidence type="ECO:0000269" key="6">
    <source>
    </source>
</evidence>
<evidence type="ECO:0000269" key="7">
    <source>
    </source>
</evidence>
<evidence type="ECO:0000269" key="8">
    <source>
    </source>
</evidence>
<evidence type="ECO:0000269" key="9">
    <source>
    </source>
</evidence>
<evidence type="ECO:0000269" key="10">
    <source>
    </source>
</evidence>
<evidence type="ECO:0000269" key="11">
    <source>
    </source>
</evidence>
<evidence type="ECO:0000269" key="12">
    <source>
    </source>
</evidence>
<evidence type="ECO:0000269" key="13">
    <source>
    </source>
</evidence>
<evidence type="ECO:0000269" key="14">
    <source>
    </source>
</evidence>
<evidence type="ECO:0000269" key="15">
    <source>
    </source>
</evidence>
<evidence type="ECO:0000269" key="16">
    <source>
    </source>
</evidence>
<evidence type="ECO:0000269" key="17">
    <source>
    </source>
</evidence>
<evidence type="ECO:0000269" key="18">
    <source>
    </source>
</evidence>
<evidence type="ECO:0000303" key="19">
    <source>
    </source>
</evidence>
<evidence type="ECO:0000305" key="20"/>
<evidence type="ECO:0007829" key="21">
    <source>
        <dbReference type="PDB" id="3BIX"/>
    </source>
</evidence>
<evidence type="ECO:0007829" key="22">
    <source>
        <dbReference type="PDB" id="3VKF"/>
    </source>
</evidence>
<protein>
    <recommendedName>
        <fullName>Neuroligin-1</fullName>
    </recommendedName>
    <alternativeName>
        <fullName>Neuroligin I</fullName>
    </alternativeName>
</protein>
<organism>
    <name type="scientific">Rattus norvegicus</name>
    <name type="common">Rat</name>
    <dbReference type="NCBI Taxonomy" id="10116"/>
    <lineage>
        <taxon>Eukaryota</taxon>
        <taxon>Metazoa</taxon>
        <taxon>Chordata</taxon>
        <taxon>Craniata</taxon>
        <taxon>Vertebrata</taxon>
        <taxon>Euteleostomi</taxon>
        <taxon>Mammalia</taxon>
        <taxon>Eutheria</taxon>
        <taxon>Euarchontoglires</taxon>
        <taxon>Glires</taxon>
        <taxon>Rodentia</taxon>
        <taxon>Myomorpha</taxon>
        <taxon>Muroidea</taxon>
        <taxon>Muridae</taxon>
        <taxon>Murinae</taxon>
        <taxon>Rattus</taxon>
    </lineage>
</organism>
<gene>
    <name type="primary">Nlgn1</name>
</gene>
<proteinExistence type="evidence at protein level"/>
<feature type="signal peptide" evidence="2">
    <location>
        <begin position="1"/>
        <end position="45"/>
    </location>
</feature>
<feature type="chain" id="PRO_0000008642" description="Neuroligin-1">
    <location>
        <begin position="46"/>
        <end position="843"/>
    </location>
</feature>
<feature type="topological domain" description="Extracellular" evidence="2">
    <location>
        <begin position="46"/>
        <end position="697"/>
    </location>
</feature>
<feature type="transmembrane region" description="Helical" evidence="2">
    <location>
        <begin position="698"/>
        <end position="718"/>
    </location>
</feature>
<feature type="topological domain" description="Cytoplasmic" evidence="2">
    <location>
        <begin position="719"/>
        <end position="843"/>
    </location>
</feature>
<feature type="region of interest" description="Disordered" evidence="3">
    <location>
        <begin position="647"/>
        <end position="688"/>
    </location>
</feature>
<feature type="region of interest" description="Disordered" evidence="3">
    <location>
        <begin position="822"/>
        <end position="843"/>
    </location>
</feature>
<feature type="compositionally biased region" description="Polar residues" evidence="3">
    <location>
        <begin position="661"/>
        <end position="670"/>
    </location>
</feature>
<feature type="compositionally biased region" description="Basic residues" evidence="3">
    <location>
        <begin position="831"/>
        <end position="843"/>
    </location>
</feature>
<feature type="glycosylation site" description="N-linked (GlcNAc...) (complex) asparagine" evidence="8">
    <location>
        <position position="109"/>
    </location>
</feature>
<feature type="glycosylation site" description="N-linked (GlcNAc...) (complex) asparagine" evidence="5">
    <location>
        <position position="303"/>
    </location>
</feature>
<feature type="glycosylation site" description="N-linked (GlcNAc...) (complex) asparagine" evidence="8">
    <location>
        <position position="343"/>
    </location>
</feature>
<feature type="glycosylation site" description="N-linked (GlcNAc...) asparagine" evidence="5">
    <location>
        <position position="547"/>
    </location>
</feature>
<feature type="glycosylation site" description="O-linked (GalNAc...) serine" evidence="5">
    <location>
        <position position="683"/>
    </location>
</feature>
<feature type="glycosylation site" description="O-linked (GalNAc...) serine" evidence="5">
    <location>
        <position position="686"/>
    </location>
</feature>
<feature type="disulfide bond">
    <location>
        <begin position="117"/>
        <end position="153"/>
    </location>
</feature>
<feature type="disulfide bond">
    <location>
        <begin position="172"/>
        <end position="181"/>
    </location>
</feature>
<feature type="disulfide bond">
    <location>
        <begin position="342"/>
        <end position="353"/>
    </location>
</feature>
<feature type="disulfide bond">
    <location>
        <begin position="512"/>
        <end position="546"/>
    </location>
</feature>
<feature type="splice variant" id="VSP_007531" description="In isoform 2 and isoform 4." evidence="19">
    <location>
        <begin position="165"/>
        <end position="184"/>
    </location>
</feature>
<feature type="splice variant" id="VSP_007532" description="In isoform 2 and isoform 3." evidence="19">
    <location>
        <begin position="298"/>
        <end position="306"/>
    </location>
</feature>
<feature type="strand" evidence="21">
    <location>
        <begin position="54"/>
        <end position="57"/>
    </location>
</feature>
<feature type="strand" evidence="21">
    <location>
        <begin position="60"/>
        <end position="63"/>
    </location>
</feature>
<feature type="strand" evidence="21">
    <location>
        <begin position="65"/>
        <end position="67"/>
    </location>
</feature>
<feature type="strand" evidence="21">
    <location>
        <begin position="70"/>
        <end position="74"/>
    </location>
</feature>
<feature type="strand" evidence="21">
    <location>
        <begin position="77"/>
        <end position="84"/>
    </location>
</feature>
<feature type="helix" evidence="21">
    <location>
        <begin position="91"/>
        <end position="93"/>
    </location>
</feature>
<feature type="strand" evidence="21">
    <location>
        <begin position="105"/>
        <end position="109"/>
    </location>
</feature>
<feature type="strand" evidence="21">
    <location>
        <begin position="122"/>
        <end position="124"/>
    </location>
</feature>
<feature type="turn" evidence="21">
    <location>
        <begin position="128"/>
        <end position="130"/>
    </location>
</feature>
<feature type="helix" evidence="21">
    <location>
        <begin position="133"/>
        <end position="136"/>
    </location>
</feature>
<feature type="helix" evidence="21">
    <location>
        <begin position="139"/>
        <end position="145"/>
    </location>
</feature>
<feature type="strand" evidence="21">
    <location>
        <begin position="146"/>
        <end position="149"/>
    </location>
</feature>
<feature type="strand" evidence="21">
    <location>
        <begin position="155"/>
        <end position="161"/>
    </location>
</feature>
<feature type="helix" evidence="22">
    <location>
        <begin position="169"/>
        <end position="174"/>
    </location>
</feature>
<feature type="helix" evidence="22">
    <location>
        <begin position="179"/>
        <end position="182"/>
    </location>
</feature>
<feature type="strand" evidence="21">
    <location>
        <begin position="193"/>
        <end position="198"/>
    </location>
</feature>
<feature type="strand" evidence="21">
    <location>
        <begin position="202"/>
        <end position="206"/>
    </location>
</feature>
<feature type="helix" evidence="21">
    <location>
        <begin position="209"/>
        <end position="211"/>
    </location>
</feature>
<feature type="helix" evidence="21">
    <location>
        <begin position="215"/>
        <end position="221"/>
    </location>
</feature>
<feature type="strand" evidence="21">
    <location>
        <begin position="224"/>
        <end position="228"/>
    </location>
</feature>
<feature type="helix" evidence="21">
    <location>
        <begin position="233"/>
        <end position="237"/>
    </location>
</feature>
<feature type="strand" evidence="21">
    <location>
        <begin position="241"/>
        <end position="244"/>
    </location>
</feature>
<feature type="helix" evidence="21">
    <location>
        <begin position="249"/>
        <end position="264"/>
    </location>
</feature>
<feature type="helix" evidence="21">
    <location>
        <begin position="265"/>
        <end position="268"/>
    </location>
</feature>
<feature type="strand" evidence="21">
    <location>
        <begin position="270"/>
        <end position="280"/>
    </location>
</feature>
<feature type="helix" evidence="21">
    <location>
        <begin position="282"/>
        <end position="291"/>
    </location>
</feature>
<feature type="helix" evidence="22">
    <location>
        <begin position="294"/>
        <end position="296"/>
    </location>
</feature>
<feature type="strand" evidence="21">
    <location>
        <begin position="311"/>
        <end position="316"/>
    </location>
</feature>
<feature type="strand" evidence="21">
    <location>
        <begin position="319"/>
        <end position="321"/>
    </location>
</feature>
<feature type="helix" evidence="21">
    <location>
        <begin position="329"/>
        <end position="340"/>
    </location>
</feature>
<feature type="helix" evidence="21">
    <location>
        <begin position="347"/>
        <end position="354"/>
    </location>
</feature>
<feature type="helix" evidence="21">
    <location>
        <begin position="359"/>
        <end position="363"/>
    </location>
</feature>
<feature type="strand" evidence="21">
    <location>
        <begin position="375"/>
        <end position="377"/>
    </location>
</feature>
<feature type="strand" evidence="21">
    <location>
        <begin position="382"/>
        <end position="385"/>
    </location>
</feature>
<feature type="helix" evidence="21">
    <location>
        <begin position="389"/>
        <end position="394"/>
    </location>
</feature>
<feature type="strand" evidence="21">
    <location>
        <begin position="402"/>
        <end position="408"/>
    </location>
</feature>
<feature type="turn" evidence="21">
    <location>
        <begin position="409"/>
        <end position="412"/>
    </location>
</feature>
<feature type="helix" evidence="21">
    <location>
        <begin position="413"/>
        <end position="416"/>
    </location>
</feature>
<feature type="turn" evidence="21">
    <location>
        <begin position="417"/>
        <end position="419"/>
    </location>
</feature>
<feature type="helix" evidence="21">
    <location>
        <begin position="428"/>
        <end position="443"/>
    </location>
</feature>
<feature type="strand" evidence="21">
    <location>
        <begin position="445"/>
        <end position="448"/>
    </location>
</feature>
<feature type="helix" evidence="21">
    <location>
        <begin position="452"/>
        <end position="459"/>
    </location>
</feature>
<feature type="helix" evidence="21">
    <location>
        <begin position="463"/>
        <end position="465"/>
    </location>
</feature>
<feature type="helix" evidence="21">
    <location>
        <begin position="469"/>
        <end position="484"/>
    </location>
</feature>
<feature type="helix" evidence="21">
    <location>
        <begin position="486"/>
        <end position="498"/>
    </location>
</feature>
<feature type="strand" evidence="21">
    <location>
        <begin position="503"/>
        <end position="508"/>
    </location>
</feature>
<feature type="strand" evidence="22">
    <location>
        <begin position="515"/>
        <end position="517"/>
    </location>
</feature>
<feature type="turn" evidence="21">
    <location>
        <begin position="525"/>
        <end position="528"/>
    </location>
</feature>
<feature type="helix" evidence="21">
    <location>
        <begin position="529"/>
        <end position="532"/>
    </location>
</feature>
<feature type="helix" evidence="21">
    <location>
        <begin position="535"/>
        <end position="538"/>
    </location>
</feature>
<feature type="strand" evidence="21">
    <location>
        <begin position="542"/>
        <end position="544"/>
    </location>
</feature>
<feature type="helix" evidence="21">
    <location>
        <begin position="550"/>
        <end position="569"/>
    </location>
</feature>
<feature type="strand" evidence="21">
    <location>
        <begin position="574"/>
        <end position="576"/>
    </location>
</feature>
<feature type="helix" evidence="21">
    <location>
        <begin position="582"/>
        <end position="584"/>
    </location>
</feature>
<feature type="turn" evidence="21">
    <location>
        <begin position="589"/>
        <end position="592"/>
    </location>
</feature>
<feature type="turn" evidence="21">
    <location>
        <begin position="600"/>
        <end position="602"/>
    </location>
</feature>
<feature type="strand" evidence="21">
    <location>
        <begin position="604"/>
        <end position="611"/>
    </location>
</feature>
<feature type="strand" evidence="21">
    <location>
        <begin position="613"/>
        <end position="617"/>
    </location>
</feature>
<feature type="helix" evidence="21">
    <location>
        <begin position="620"/>
        <end position="627"/>
    </location>
</feature>
<feature type="helix" evidence="21">
    <location>
        <begin position="629"/>
        <end position="634"/>
    </location>
</feature>
<comment type="function">
    <text evidence="1 7 16">Cell surface protein involved in cell-cell-interactions via its interactions with neurexin family members. Plays a role in synapse function and synaptic signal transmission, and probably mediates its effects by recruiting and clustering other synaptic proteins. May promote the initial formation of synapses, but is not essential for this. In vitro, triggers the de novo formation of presynaptic structures. May be involved in specification of excitatory synapses. Required to maintain wakefulness quality and normal synchrony of cerebral cortex activity during wakefulness and sleep (By similarity). The protein is involved in nervous system development.</text>
</comment>
<comment type="subunit">
    <text evidence="1 6 8 9 13 14 15 16 17">Interacts with neurexins NRXN1, NRXN2 and NRXN3 (PubMed:18334216, PubMed:20624592, PubMed:7736595, PubMed:8576240, PubMed:9325340). Interaction with neurexins is mediated by heparan sulfate glycan modification on neurexin (By similarity). Interacts with NLGN3. Interacts (via its C-terminus) with DLG4/PSD-95 (via PDZ domain 3). Interacts with GOPC (By similarity). Interacts with AIP1 and PDZRN3.</text>
</comment>
<comment type="interaction">
    <interactant intactId="EBI-7281118">
        <id>Q62765</id>
    </interactant>
    <interactant intactId="EBI-26961214">
        <id>P97924-5</id>
        <label>Kalrn</label>
    </interactant>
    <organismsDiffer>false</organismsDiffer>
    <experiments>5</experiments>
</comment>
<comment type="interaction">
    <interactant intactId="EBI-7281118">
        <id>Q62765</id>
    </interactant>
    <interactant intactId="EBI-26961238">
        <id>F1M0Z1</id>
        <label>Trio</label>
    </interactant>
    <organismsDiffer>false</organismsDiffer>
    <experiments>2</experiments>
</comment>
<comment type="interaction">
    <interactant intactId="EBI-20994039">
        <id>Q62765-2</id>
    </interactant>
    <interactant intactId="EBI-20994045">
        <id>Q63373-3</id>
        <label>Nrxn1</label>
    </interactant>
    <organismsDiffer>false</organismsDiffer>
    <experiments>5</experiments>
</comment>
<comment type="subcellular location">
    <subcellularLocation>
        <location>Cell membrane</location>
        <topology>Single-pass type I membrane protein</topology>
    </subcellularLocation>
    <subcellularLocation>
        <location evidence="10 12 18">Postsynaptic density</location>
    </subcellularLocation>
    <subcellularLocation>
        <location evidence="18">Synaptic cleft</location>
    </subcellularLocation>
    <subcellularLocation>
        <location evidence="18">Synaptic cell membrane</location>
    </subcellularLocation>
    <text evidence="12 18">Enriched in synaptic plasma membranes and clustered in synaptic clefts and postsynaptic densities. Colocalized with DLG4/PSD-95 and GRIN1/NMDAR1.</text>
</comment>
<comment type="alternative products">
    <event type="alternative splicing"/>
    <isoform>
        <id>Q62765-1</id>
        <name>1</name>
        <sequence type="displayed"/>
    </isoform>
    <isoform>
        <id>Q62765-2</id>
        <name>2</name>
        <sequence type="described" ref="VSP_007531 VSP_007532"/>
    </isoform>
    <isoform>
        <id>Q62765-3</id>
        <name>3</name>
        <sequence type="described" ref="VSP_007532"/>
    </isoform>
    <isoform>
        <id>Q62765-4</id>
        <name>4</name>
        <sequence type="described" ref="VSP_007531"/>
    </isoform>
</comment>
<comment type="tissue specificity">
    <text evidence="4 11 12 18">Expressed in brain, almost exclusively in neurons, and spinal cord. Detected in pancreas islet beta cells.</text>
</comment>
<comment type="developmental stage">
    <text evidence="18">Expression is low in embryonic brains (12 dpc to 16 dpc) but increases dramatically after birth (postnatal days P0-P3) and reaches a plateau during the period when most synapses are formed (P5-P8).</text>
</comment>
<comment type="PTM">
    <text>The N-terminus is blocked.</text>
</comment>
<comment type="similarity">
    <text evidence="20">Belongs to the type-B carboxylesterase/lipase family.</text>
</comment>
<name>NLGN1_RAT</name>
<keyword id="KW-0002">3D-structure</keyword>
<keyword id="KW-0025">Alternative splicing</keyword>
<keyword id="KW-0090">Biological rhythms</keyword>
<keyword id="KW-0130">Cell adhesion</keyword>
<keyword id="KW-1003">Cell membrane</keyword>
<keyword id="KW-0903">Direct protein sequencing</keyword>
<keyword id="KW-1015">Disulfide bond</keyword>
<keyword id="KW-0325">Glycoprotein</keyword>
<keyword id="KW-0472">Membrane</keyword>
<keyword id="KW-1185">Reference proteome</keyword>
<keyword id="KW-0964">Secreted</keyword>
<keyword id="KW-0732">Signal</keyword>
<keyword id="KW-0770">Synapse</keyword>
<keyword id="KW-0812">Transmembrane</keyword>
<keyword id="KW-1133">Transmembrane helix</keyword>
<reference key="1">
    <citation type="journal article" date="1995" name="Cell">
        <title>Neuroligin 1: a splice site-specific ligand for beta-neurexins.</title>
        <authorList>
            <person name="Ichtchenko K."/>
            <person name="Hata Y."/>
            <person name="Nguyen T."/>
            <person name="Ullrich B."/>
            <person name="Missler M."/>
            <person name="Moomaw C."/>
            <person name="Suedhof T.C."/>
        </authorList>
    </citation>
    <scope>NUCLEOTIDE SEQUENCE [MRNA] (ISOFORMS 1; 2; 3 AND 4)</scope>
    <scope>PARTIAL PROTEIN SEQUENCE</scope>
    <scope>CHARACTERIZATION</scope>
    <scope>INTERACTION WITH NEUREXIN 1-BETA</scope>
    <source>
        <tissue>Brain</tissue>
    </source>
</reference>
<reference key="2">
    <citation type="journal article" date="1997" name="J. Biol. Chem.">
        <title>Binding properties of neuroligin 1 and neurexin 1beta reveal function as heterophilic cell adhesion molecules.</title>
        <authorList>
            <person name="Nguyen T."/>
            <person name="Suedhof T.C."/>
        </authorList>
    </citation>
    <scope>INTERACTION WITH NEUREXIN 1-BETA</scope>
    <scope>FUNCTION</scope>
</reference>
<reference key="3">
    <citation type="journal article" date="1996" name="J. Biol. Chem.">
        <title>Structures, alternative splicing, and neurexin binding of multiple neuroligins.</title>
        <authorList>
            <person name="Ichtchenko K."/>
            <person name="Nguyen T."/>
            <person name="Suedhof T.C."/>
        </authorList>
    </citation>
    <scope>BLOCKAGE OF N-TERMINUS</scope>
    <scope>INTERACTION WITH NEUREXIN 1-BETA; NEUREXIN 2-BETA AND NEUREXIN 3-BETA</scope>
</reference>
<reference key="4">
    <citation type="journal article" date="1999" name="Proc. Natl. Acad. Sci. U.S.A.">
        <title>Neuroligin 1 is a postsynaptic cell-adhesion molecule of excitatory synapses.</title>
        <authorList>
            <person name="Song J.-Y."/>
            <person name="Ichtchenko K."/>
            <person name="Suedhof T.C."/>
            <person name="Brose N."/>
        </authorList>
    </citation>
    <scope>TISSUE SPECIFICITY</scope>
    <scope>SUBCELLULAR LOCATION</scope>
    <scope>DEVELOPMENTAL STAGE</scope>
</reference>
<reference key="5">
    <citation type="journal article" date="1998" name="J. Biol. Chem.">
        <title>A novel multiple PDZ domain-containing molecule interacting with N-methyl-d-aspartate receptors and neuronal cell adhesion proteins.</title>
        <authorList>
            <person name="Hirao K."/>
            <person name="Hata Y."/>
            <person name="Ide N."/>
            <person name="Takeuchi M."/>
            <person name="Irie M."/>
            <person name="Yao I."/>
            <person name="Deguchi M."/>
            <person name="Toyoda A."/>
            <person name="Suedhof T.C."/>
            <person name="Takai Y."/>
        </authorList>
    </citation>
    <scope>INTERACTION WITH AIP1</scope>
</reference>
<reference key="6">
    <citation type="journal article" date="2001" name="Glia">
        <title>Neuroligin 3 is a vertebrate gliotactin expressed in the olfactory ensheathing glia, a growth-promoting class of macroglia.</title>
        <authorList>
            <person name="Gilbert M."/>
            <person name="Smith J."/>
            <person name="Roskams A.J."/>
            <person name="Auld V.J."/>
        </authorList>
    </citation>
    <scope>TISSUE SPECIFICITY</scope>
</reference>
<reference key="7">
    <citation type="journal article" date="2004" name="Biochemistry">
        <title>Structural characterization of recombinant soluble rat neuroligin 1: mapping of secondary structure and glycosylation by mass spectrometry.</title>
        <authorList>
            <person name="Hoffman R.C."/>
            <person name="Jennings L.L."/>
            <person name="Tsigelny I."/>
            <person name="Comoletti D."/>
            <person name="Flynn R.E."/>
            <person name="Suedhof T.C."/>
            <person name="Taylor P."/>
        </authorList>
    </citation>
    <scope>DISULFIDE BONDS</scope>
    <scope>GLYCOSYLATION</scope>
</reference>
<reference key="8">
    <citation type="journal article" date="2004" name="Cell">
        <title>Neurexins induce differentiation of GABA and glutamate postsynaptic specializations via neuroligins.</title>
        <authorList>
            <person name="Graf E.R."/>
            <person name="Zhang X."/>
            <person name="Jin S.X."/>
            <person name="Linhoff M.W."/>
            <person name="Craig A.M."/>
        </authorList>
    </citation>
    <scope>FUNCTION</scope>
    <scope>SUBCELLULAR LOCATION</scope>
</reference>
<reference key="9">
    <citation type="journal article" date="2004" name="Neuropharmacology">
        <title>The complexity of PDZ domain-mediated interactions at glutamatergic synapses: a case study on neuroligin.</title>
        <authorList>
            <person name="Meyer G."/>
            <person name="Varoqueaux F."/>
            <person name="Neeb A."/>
            <person name="Oschlies M."/>
            <person name="Brose N."/>
        </authorList>
    </citation>
    <scope>INTERACTION WITH PDZRN3</scope>
</reference>
<reference key="10">
    <citation type="journal article" date="2008" name="Endocrinology">
        <title>Expression of neurexin, neuroligin, and their cytoplasmic binding partners in the pancreatic beta-cells and the involvement of neuroligin in insulin secretion.</title>
        <authorList>
            <person name="Suckow A.T."/>
            <person name="Comoletti D."/>
            <person name="Waldrop M.A."/>
            <person name="Mosedale M."/>
            <person name="Egodage S."/>
            <person name="Taylor P."/>
            <person name="Chessler S.D."/>
        </authorList>
    </citation>
    <scope>TISSUE SPECIFICITY</scope>
    <scope>ALTERNATIVE SPLICING</scope>
</reference>
<reference key="11">
    <citation type="journal article" date="2008" name="Proc. Natl. Acad. Sci. U.S.A.">
        <title>Unusually rapid evolution of neuroligin-4 in mice.</title>
        <authorList>
            <person name="Bolliger M.F."/>
            <person name="Pei J."/>
            <person name="Maxeiner S."/>
            <person name="Boucard A.A."/>
            <person name="Grishin N.V."/>
            <person name="Sudhof T.C."/>
        </authorList>
    </citation>
    <scope>SUBCELLULAR LOCATION</scope>
</reference>
<reference key="12">
    <citation type="journal article" date="2008" name="Structure">
        <title>Crystal structures of beta-neurexin 1 and beta-neurexin 2 ectodomains and dynamics of splice insertion sequence 4.</title>
        <authorList>
            <person name="Koehnke J."/>
            <person name="Jin X."/>
            <person name="Trbovic N."/>
            <person name="Katsamba P.S."/>
            <person name="Brasch J."/>
            <person name="Ahlsen G."/>
            <person name="Scheiffele P."/>
            <person name="Honig B."/>
            <person name="Palmer A.G. III"/>
            <person name="Shapiro L."/>
        </authorList>
    </citation>
    <scope>INTERACTION WITH NRXN1</scope>
</reference>
<reference key="13">
    <citation type="journal article" date="2010" name="Neuron">
        <title>Splice form dependence of beta-neurexin/neuroligin binding interactions.</title>
        <authorList>
            <person name="Koehnke J."/>
            <person name="Katsamba P.S."/>
            <person name="Ahlsen G."/>
            <person name="Bahna F."/>
            <person name="Vendome J."/>
            <person name="Honig B."/>
            <person name="Shapiro L."/>
            <person name="Jin X."/>
        </authorList>
    </citation>
    <scope>INTERACTION WITH NRXN1</scope>
</reference>
<reference key="14">
    <citation type="journal article" date="2010" name="Neuroscience">
        <title>Postsynaptic scaffolding molecules modulate the localization of neuroligins.</title>
        <authorList>
            <person name="Levinson J.N."/>
            <person name="Li R."/>
            <person name="Kang R."/>
            <person name="Moukhles H."/>
            <person name="El-Husseini A."/>
            <person name="Bamji S.X."/>
        </authorList>
    </citation>
    <scope>SUBCELLULAR LOCATION</scope>
    <scope>TISSUE SPECIFICITY</scope>
</reference>
<reference key="15">
    <citation type="journal article" date="2007" name="Neuron">
        <title>Structures of neuroligin-1 and the neuroligin-1/neurexin-1 beta complex reveal specific protein-protein and protein-Ca2+ interactions.</title>
        <authorList>
            <person name="Arac D."/>
            <person name="Boucard A.A."/>
            <person name="Ozkan E."/>
            <person name="Strop P."/>
            <person name="Newell E."/>
            <person name="Sudhof T.C."/>
            <person name="Brunger A.T."/>
        </authorList>
    </citation>
    <scope>X-RAY CRYSTALLOGRAPHY (1.8 ANGSTROMS) OF 46-638 IN COMPLEX WITH NRXN1</scope>
    <scope>GLYCOSYLATION AT ASN-109 AND ASN-343</scope>
    <scope>DISULFIDE BONDS</scope>
</reference>
<accession>Q62765</accession>